<evidence type="ECO:0000250" key="1">
    <source>
        <dbReference type="UniProtKB" id="P9WJ87"/>
    </source>
</evidence>
<feature type="chain" id="PRO_0000406296" description="Antitoxin MazE2">
    <location>
        <begin position="1"/>
        <end position="82"/>
    </location>
</feature>
<reference key="1">
    <citation type="journal article" date="2003" name="Proc. Natl. Acad. Sci. U.S.A.">
        <title>The complete genome sequence of Mycobacterium bovis.</title>
        <authorList>
            <person name="Garnier T."/>
            <person name="Eiglmeier K."/>
            <person name="Camus J.-C."/>
            <person name="Medina N."/>
            <person name="Mansoor H."/>
            <person name="Pryor M."/>
            <person name="Duthoy S."/>
            <person name="Grondin S."/>
            <person name="Lacroix C."/>
            <person name="Monsempe C."/>
            <person name="Simon S."/>
            <person name="Harris B."/>
            <person name="Atkin R."/>
            <person name="Doggett J."/>
            <person name="Mayes R."/>
            <person name="Keating L."/>
            <person name="Wheeler P.R."/>
            <person name="Parkhill J."/>
            <person name="Barrell B.G."/>
            <person name="Cole S.T."/>
            <person name="Gordon S.V."/>
            <person name="Hewinson R.G."/>
        </authorList>
    </citation>
    <scope>NUCLEOTIDE SEQUENCE [LARGE SCALE GENOMIC DNA]</scope>
    <source>
        <strain>ATCC BAA-935 / AF2122/97</strain>
    </source>
</reference>
<reference key="2">
    <citation type="journal article" date="2017" name="Genome Announc.">
        <title>Updated reference genome sequence and annotation of Mycobacterium bovis AF2122/97.</title>
        <authorList>
            <person name="Malone K.M."/>
            <person name="Farrell D."/>
            <person name="Stuber T.P."/>
            <person name="Schubert O.T."/>
            <person name="Aebersold R."/>
            <person name="Robbe-Austerman S."/>
            <person name="Gordon S.V."/>
        </authorList>
    </citation>
    <scope>NUCLEOTIDE SEQUENCE [LARGE SCALE GENOMIC DNA]</scope>
    <scope>GENOME REANNOTATION</scope>
    <source>
        <strain>ATCC BAA-935 / AF2122/97</strain>
    </source>
</reference>
<comment type="function">
    <text evidence="1">Antitoxin component of a type II toxin-antitoxin (TA) system. Labile antitoxin that binds to cognate MazF2 toxin and counteracts its endoribonuclease activity.</text>
</comment>
<comment type="subunit">
    <text evidence="1">Probably forms a complex with cognate toxin MazF2.</text>
</comment>
<proteinExistence type="inferred from homology"/>
<gene>
    <name type="primary">mazE2</name>
    <name type="ordered locus">BQ2027_MB2014A</name>
</gene>
<keyword id="KW-1185">Reference proteome</keyword>
<keyword id="KW-1277">Toxin-antitoxin system</keyword>
<sequence length="82" mass="9290">MKTAISLPDETFDRVSRRASELGMSRSEFFTKAAQRYLHELDAQLLTGQIDRALESIHGTDEAEALAVANAYRVLETMDDEW</sequence>
<name>MAZE2_MYCBO</name>
<protein>
    <recommendedName>
        <fullName>Antitoxin MazE2</fullName>
    </recommendedName>
</protein>
<dbReference type="EMBL" id="LT708304">
    <property type="protein sequence ID" value="SIU00621.1"/>
    <property type="molecule type" value="Genomic_DNA"/>
</dbReference>
<dbReference type="RefSeq" id="WP_003410014.1">
    <property type="nucleotide sequence ID" value="NC_002945.4"/>
</dbReference>
<dbReference type="SMR" id="P0CL58"/>
<dbReference type="KEGG" id="mbo:BQ2027_MB2014A"/>
<dbReference type="Proteomes" id="UP000001419">
    <property type="component" value="Chromosome"/>
</dbReference>
<dbReference type="GO" id="GO:0006355">
    <property type="term" value="P:regulation of DNA-templated transcription"/>
    <property type="evidence" value="ECO:0007669"/>
    <property type="project" value="InterPro"/>
</dbReference>
<dbReference type="Gene3D" id="1.10.1220.10">
    <property type="entry name" value="Met repressor-like"/>
    <property type="match status" value="1"/>
</dbReference>
<dbReference type="InterPro" id="IPR013321">
    <property type="entry name" value="Arc_rbn_hlx_hlx"/>
</dbReference>
<dbReference type="InterPro" id="IPR002145">
    <property type="entry name" value="CopG"/>
</dbReference>
<dbReference type="InterPro" id="IPR010985">
    <property type="entry name" value="Ribbon_hlx_hlx"/>
</dbReference>
<dbReference type="Pfam" id="PF01402">
    <property type="entry name" value="RHH_1"/>
    <property type="match status" value="1"/>
</dbReference>
<dbReference type="SUPFAM" id="SSF47598">
    <property type="entry name" value="Ribbon-helix-helix"/>
    <property type="match status" value="1"/>
</dbReference>
<accession>P0CL58</accession>
<accession>A0A1R3XZV3</accession>
<accession>X2BJQ6</accession>
<organism>
    <name type="scientific">Mycobacterium bovis (strain ATCC BAA-935 / AF2122/97)</name>
    <dbReference type="NCBI Taxonomy" id="233413"/>
    <lineage>
        <taxon>Bacteria</taxon>
        <taxon>Bacillati</taxon>
        <taxon>Actinomycetota</taxon>
        <taxon>Actinomycetes</taxon>
        <taxon>Mycobacteriales</taxon>
        <taxon>Mycobacteriaceae</taxon>
        <taxon>Mycobacterium</taxon>
        <taxon>Mycobacterium tuberculosis complex</taxon>
    </lineage>
</organism>